<keyword id="KW-0210">Decarboxylase</keyword>
<keyword id="KW-0456">Lyase</keyword>
<keyword id="KW-0663">Pyridoxal phosphate</keyword>
<protein>
    <recommendedName>
        <fullName evidence="1">Histidine decarboxylase</fullName>
        <shortName evidence="1">HDC</shortName>
        <ecNumber evidence="1">4.1.1.22</ecNumber>
    </recommendedName>
</protein>
<organism>
    <name type="scientific">Mesorhizobium japonicum (strain LMG 29417 / CECT 9101 / MAFF 303099)</name>
    <name type="common">Mesorhizobium loti (strain MAFF 303099)</name>
    <dbReference type="NCBI Taxonomy" id="266835"/>
    <lineage>
        <taxon>Bacteria</taxon>
        <taxon>Pseudomonadati</taxon>
        <taxon>Pseudomonadota</taxon>
        <taxon>Alphaproteobacteria</taxon>
        <taxon>Hyphomicrobiales</taxon>
        <taxon>Phyllobacteriaceae</taxon>
        <taxon>Mesorhizobium</taxon>
    </lineage>
</organism>
<proteinExistence type="inferred from homology"/>
<comment type="catalytic activity">
    <reaction evidence="1">
        <text>L-histidine + H(+) = histamine + CO2</text>
        <dbReference type="Rhea" id="RHEA:20840"/>
        <dbReference type="ChEBI" id="CHEBI:15378"/>
        <dbReference type="ChEBI" id="CHEBI:16526"/>
        <dbReference type="ChEBI" id="CHEBI:57595"/>
        <dbReference type="ChEBI" id="CHEBI:58432"/>
        <dbReference type="EC" id="4.1.1.22"/>
    </reaction>
</comment>
<comment type="cofactor">
    <cofactor evidence="1">
        <name>pyridoxal 5'-phosphate</name>
        <dbReference type="ChEBI" id="CHEBI:597326"/>
    </cofactor>
</comment>
<comment type="subunit">
    <text evidence="1">Homotetramer.</text>
</comment>
<comment type="similarity">
    <text evidence="1">Belongs to the group II decarboxylase family.</text>
</comment>
<sequence length="369" mass="41034">MLEPQDQKKLDELFSSMQEANGCFLGYPFAKDFDYEPLWRFMSLTGNNLGDPFEPGTYRVNSHAFECDVVDFFARLFRACSCEVWGYVTNGGTEGNIYGLYLARELYPNAVAYFSQDTHYSVSKGVRLLRLEHSVVRSQSNGEINYDDLAQKATRYRTRPAVVVANIGTTMKEGKDDTLKIRAVLHDVGISAIYVHSDAALCGPYAPLLNPKPAFDFADGADSITLSGHKFLGAPMPCGVVLSHKLHVQRVMRNIDYIGSSDTTLSGSRNAFTPIILWYAIRSLGIEGIKQTFQQCERLAAYTADELNVRGVSAWRNPNALTVVLPPVEDSIKTKWQIATQDVSHLVVTPGTTKQQADALIETISNRNR</sequence>
<name>DCHS_RHILO</name>
<gene>
    <name evidence="1" type="primary">hdc</name>
    <name type="ordered locus">mlr6209</name>
</gene>
<reference key="1">
    <citation type="journal article" date="2000" name="DNA Res.">
        <title>Complete genome structure of the nitrogen-fixing symbiotic bacterium Mesorhizobium loti.</title>
        <authorList>
            <person name="Kaneko T."/>
            <person name="Nakamura Y."/>
            <person name="Sato S."/>
            <person name="Asamizu E."/>
            <person name="Kato T."/>
            <person name="Sasamoto S."/>
            <person name="Watanabe A."/>
            <person name="Idesawa K."/>
            <person name="Ishikawa A."/>
            <person name="Kawashima K."/>
            <person name="Kimura T."/>
            <person name="Kishida Y."/>
            <person name="Kiyokawa C."/>
            <person name="Kohara M."/>
            <person name="Matsumoto M."/>
            <person name="Matsuno A."/>
            <person name="Mochizuki Y."/>
            <person name="Nakayama S."/>
            <person name="Nakazaki N."/>
            <person name="Shimpo S."/>
            <person name="Sugimoto M."/>
            <person name="Takeuchi C."/>
            <person name="Yamada M."/>
            <person name="Tabata S."/>
        </authorList>
    </citation>
    <scope>NUCLEOTIDE SEQUENCE [LARGE SCALE GENOMIC DNA]</scope>
    <source>
        <strain>LMG 29417 / CECT 9101 / MAFF 303099</strain>
    </source>
</reference>
<dbReference type="EC" id="4.1.1.22" evidence="1"/>
<dbReference type="EMBL" id="BA000012">
    <property type="protein sequence ID" value="BAB52537.1"/>
    <property type="molecule type" value="Genomic_DNA"/>
</dbReference>
<dbReference type="RefSeq" id="WP_010913856.1">
    <property type="nucleotide sequence ID" value="NC_002678.2"/>
</dbReference>
<dbReference type="SMR" id="Q98A07"/>
<dbReference type="KEGG" id="mlo:mlr6209"/>
<dbReference type="eggNOG" id="COG0076">
    <property type="taxonomic scope" value="Bacteria"/>
</dbReference>
<dbReference type="HOGENOM" id="CLU_028929_0_2_5"/>
<dbReference type="BRENDA" id="4.1.1.22">
    <property type="organism ID" value="3243"/>
</dbReference>
<dbReference type="Proteomes" id="UP000000552">
    <property type="component" value="Chromosome"/>
</dbReference>
<dbReference type="GO" id="GO:0004398">
    <property type="term" value="F:histidine decarboxylase activity"/>
    <property type="evidence" value="ECO:0007669"/>
    <property type="project" value="UniProtKB-UniRule"/>
</dbReference>
<dbReference type="GO" id="GO:0030170">
    <property type="term" value="F:pyridoxal phosphate binding"/>
    <property type="evidence" value="ECO:0007669"/>
    <property type="project" value="InterPro"/>
</dbReference>
<dbReference type="GO" id="GO:0019752">
    <property type="term" value="P:carboxylic acid metabolic process"/>
    <property type="evidence" value="ECO:0007669"/>
    <property type="project" value="InterPro"/>
</dbReference>
<dbReference type="Gene3D" id="3.40.640.10">
    <property type="entry name" value="Type I PLP-dependent aspartate aminotransferase-like (Major domain)"/>
    <property type="match status" value="1"/>
</dbReference>
<dbReference type="HAMAP" id="MF_00609">
    <property type="entry name" value="Pyridoxal_decarbox"/>
    <property type="match status" value="1"/>
</dbReference>
<dbReference type="InterPro" id="IPR051151">
    <property type="entry name" value="Group_II_Decarboxylase"/>
</dbReference>
<dbReference type="InterPro" id="IPR023523">
    <property type="entry name" value="Hist_deCOase_bac"/>
</dbReference>
<dbReference type="InterPro" id="IPR002129">
    <property type="entry name" value="PyrdxlP-dep_de-COase"/>
</dbReference>
<dbReference type="InterPro" id="IPR015424">
    <property type="entry name" value="PyrdxlP-dep_Trfase"/>
</dbReference>
<dbReference type="InterPro" id="IPR015421">
    <property type="entry name" value="PyrdxlP-dep_Trfase_major"/>
</dbReference>
<dbReference type="NCBIfam" id="NF002748">
    <property type="entry name" value="PRK02769.1"/>
    <property type="match status" value="1"/>
</dbReference>
<dbReference type="PANTHER" id="PTHR46101">
    <property type="match status" value="1"/>
</dbReference>
<dbReference type="PANTHER" id="PTHR46101:SF2">
    <property type="entry name" value="SERINE DECARBOXYLASE"/>
    <property type="match status" value="1"/>
</dbReference>
<dbReference type="Pfam" id="PF00282">
    <property type="entry name" value="Pyridoxal_deC"/>
    <property type="match status" value="1"/>
</dbReference>
<dbReference type="SUPFAM" id="SSF53383">
    <property type="entry name" value="PLP-dependent transferases"/>
    <property type="match status" value="1"/>
</dbReference>
<feature type="chain" id="PRO_0000146960" description="Histidine decarboxylase">
    <location>
        <begin position="1"/>
        <end position="369"/>
    </location>
</feature>
<feature type="binding site" evidence="1">
    <location>
        <position position="119"/>
    </location>
    <ligand>
        <name>substrate</name>
    </ligand>
</feature>
<feature type="modified residue" description="N6-(pyridoxal phosphate)lysine" evidence="1">
    <location>
        <position position="230"/>
    </location>
</feature>
<evidence type="ECO:0000255" key="1">
    <source>
        <dbReference type="HAMAP-Rule" id="MF_00609"/>
    </source>
</evidence>
<accession>Q98A07</accession>